<gene>
    <name evidence="3" type="primary">MSD11</name>
</gene>
<protein>
    <recommendedName>
        <fullName evidence="3">MSDIN-like toxin proprotein 11</fullName>
    </recommendedName>
    <component>
        <recommendedName>
            <fullName evidence="3">Toxin MSD11</fullName>
        </recommendedName>
    </component>
</protein>
<name>MSD11_AMABI</name>
<dbReference type="EMBL" id="EU196154">
    <property type="protein sequence ID" value="ABW87783.1"/>
    <property type="molecule type" value="Genomic_DNA"/>
</dbReference>
<dbReference type="GO" id="GO:0090729">
    <property type="term" value="F:toxin activity"/>
    <property type="evidence" value="ECO:0007669"/>
    <property type="project" value="UniProtKB-KW"/>
</dbReference>
<dbReference type="InterPro" id="IPR027582">
    <property type="entry name" value="Amanitin/phalloidin"/>
</dbReference>
<dbReference type="NCBIfam" id="TIGR04309">
    <property type="entry name" value="amanitin"/>
    <property type="match status" value="1"/>
</dbReference>
<comment type="function">
    <text evidence="5">Probable toxin that belongs to the MSDIN-like toxin family responsible for a large number of food poisoning cases and deaths (PubMed:18025465).</text>
</comment>
<comment type="PTM">
    <text evidence="1 5">Processed by the macrocyclase-peptidase enzyme POPB to yield a toxic cyclic nonapeptide (PubMed:18025465). POPB first removes 10 residues from the N-terminus (By similarity). Conformational trapping of the remaining peptide forces the enzyme to release this intermediate rather than proceed to macrocyclization (By similarity). The enzyme rebinds the remaining peptide in a different conformation and catalyzes macrocyclization of the N-terminal 9 residues (By similarity).</text>
</comment>
<comment type="similarity">
    <text evidence="4">Belongs to the MSDIN fungal toxin family.</text>
</comment>
<accession>A8W7N9</accession>
<evidence type="ECO:0000250" key="1">
    <source>
        <dbReference type="UniProtKB" id="A0A067SLB9"/>
    </source>
</evidence>
<evidence type="ECO:0000256" key="2">
    <source>
        <dbReference type="SAM" id="MobiDB-lite"/>
    </source>
</evidence>
<evidence type="ECO:0000303" key="3">
    <source>
    </source>
</evidence>
<evidence type="ECO:0000305" key="4"/>
<evidence type="ECO:0000305" key="5">
    <source>
    </source>
</evidence>
<organism>
    <name type="scientific">Amanita bisporigera</name>
    <name type="common">Destroying angel</name>
    <dbReference type="NCBI Taxonomy" id="87325"/>
    <lineage>
        <taxon>Eukaryota</taxon>
        <taxon>Fungi</taxon>
        <taxon>Dikarya</taxon>
        <taxon>Basidiomycota</taxon>
        <taxon>Agaricomycotina</taxon>
        <taxon>Agaricomycetes</taxon>
        <taxon>Agaricomycetidae</taxon>
        <taxon>Agaricales</taxon>
        <taxon>Pluteineae</taxon>
        <taxon>Amanitaceae</taxon>
        <taxon>Amanita</taxon>
    </lineage>
</organism>
<feature type="propeptide" id="PRO_0000443665" evidence="5">
    <location>
        <begin position="1"/>
        <end position="10"/>
    </location>
</feature>
<feature type="peptide" id="PRO_0000443666" description="Toxin MSD11" evidence="5">
    <location>
        <begin position="11"/>
        <end position="19"/>
    </location>
</feature>
<feature type="propeptide" id="PRO_0000443667" evidence="5">
    <location>
        <begin position="20"/>
        <end position="32"/>
    </location>
</feature>
<feature type="region of interest" description="Disordered" evidence="2">
    <location>
        <begin position="1"/>
        <end position="32"/>
    </location>
</feature>
<feature type="cross-link" description="Cyclopeptide (Gly-Pro)" evidence="5">
    <location>
        <begin position="11"/>
        <end position="19"/>
    </location>
</feature>
<feature type="non-terminal residue" evidence="4">
    <location>
        <position position="32"/>
    </location>
</feature>
<proteinExistence type="inferred from homology"/>
<sequence length="32" mass="3392">MSDINATRLPGMEPPSPMPCVGDADNFTLTRG</sequence>
<keyword id="KW-0800">Toxin</keyword>
<reference key="1">
    <citation type="journal article" date="2007" name="Proc. Natl. Acad. Sci. U.S.A.">
        <title>Gene family encoding the major toxins of lethal Amanita mushrooms.</title>
        <authorList>
            <person name="Hallen H.E."/>
            <person name="Luo H."/>
            <person name="Scott-Craig J.S."/>
            <person name="Walton J.D."/>
        </authorList>
    </citation>
    <scope>NUCLEOTIDE SEQUENCE [GENOMIC DNA]</scope>
    <scope>FUNCTION</scope>
</reference>